<reference key="1">
    <citation type="journal article" date="2009" name="PLoS Genet.">
        <title>Organised genome dynamics in the Escherichia coli species results in highly diverse adaptive paths.</title>
        <authorList>
            <person name="Touchon M."/>
            <person name="Hoede C."/>
            <person name="Tenaillon O."/>
            <person name="Barbe V."/>
            <person name="Baeriswyl S."/>
            <person name="Bidet P."/>
            <person name="Bingen E."/>
            <person name="Bonacorsi S."/>
            <person name="Bouchier C."/>
            <person name="Bouvet O."/>
            <person name="Calteau A."/>
            <person name="Chiapello H."/>
            <person name="Clermont O."/>
            <person name="Cruveiller S."/>
            <person name="Danchin A."/>
            <person name="Diard M."/>
            <person name="Dossat C."/>
            <person name="Karoui M.E."/>
            <person name="Frapy E."/>
            <person name="Garry L."/>
            <person name="Ghigo J.M."/>
            <person name="Gilles A.M."/>
            <person name="Johnson J."/>
            <person name="Le Bouguenec C."/>
            <person name="Lescat M."/>
            <person name="Mangenot S."/>
            <person name="Martinez-Jehanne V."/>
            <person name="Matic I."/>
            <person name="Nassif X."/>
            <person name="Oztas S."/>
            <person name="Petit M.A."/>
            <person name="Pichon C."/>
            <person name="Rouy Z."/>
            <person name="Ruf C.S."/>
            <person name="Schneider D."/>
            <person name="Tourret J."/>
            <person name="Vacherie B."/>
            <person name="Vallenet D."/>
            <person name="Medigue C."/>
            <person name="Rocha E.P.C."/>
            <person name="Denamur E."/>
        </authorList>
    </citation>
    <scope>NUCLEOTIDE SEQUENCE [LARGE SCALE GENOMIC DNA]</scope>
    <source>
        <strain>55989 / EAEC</strain>
    </source>
</reference>
<accession>B7LHN5</accession>
<protein>
    <recommendedName>
        <fullName evidence="1">Ribosome maturation factor RimP</fullName>
    </recommendedName>
</protein>
<comment type="function">
    <text evidence="1">Required for maturation of 30S ribosomal subunits.</text>
</comment>
<comment type="subcellular location">
    <subcellularLocation>
        <location evidence="1">Cytoplasm</location>
    </subcellularLocation>
</comment>
<comment type="similarity">
    <text evidence="1">Belongs to the RimP family.</text>
</comment>
<evidence type="ECO:0000255" key="1">
    <source>
        <dbReference type="HAMAP-Rule" id="MF_01077"/>
    </source>
</evidence>
<dbReference type="EMBL" id="CU928145">
    <property type="protein sequence ID" value="CAU99801.1"/>
    <property type="molecule type" value="Genomic_DNA"/>
</dbReference>
<dbReference type="RefSeq" id="WP_001300397.1">
    <property type="nucleotide sequence ID" value="NZ_CP028304.1"/>
</dbReference>
<dbReference type="SMR" id="B7LHN5"/>
<dbReference type="GeneID" id="93778813"/>
<dbReference type="KEGG" id="eck:EC55989_3590"/>
<dbReference type="HOGENOM" id="CLU_070525_1_1_6"/>
<dbReference type="Proteomes" id="UP000000746">
    <property type="component" value="Chromosome"/>
</dbReference>
<dbReference type="GO" id="GO:0005829">
    <property type="term" value="C:cytosol"/>
    <property type="evidence" value="ECO:0007669"/>
    <property type="project" value="TreeGrafter"/>
</dbReference>
<dbReference type="GO" id="GO:0000028">
    <property type="term" value="P:ribosomal small subunit assembly"/>
    <property type="evidence" value="ECO:0007669"/>
    <property type="project" value="TreeGrafter"/>
</dbReference>
<dbReference type="GO" id="GO:0006412">
    <property type="term" value="P:translation"/>
    <property type="evidence" value="ECO:0007669"/>
    <property type="project" value="TreeGrafter"/>
</dbReference>
<dbReference type="CDD" id="cd01734">
    <property type="entry name" value="YlxS_C"/>
    <property type="match status" value="1"/>
</dbReference>
<dbReference type="FunFam" id="2.30.30.180:FF:000001">
    <property type="entry name" value="Ribosome maturation factor RimP"/>
    <property type="match status" value="1"/>
</dbReference>
<dbReference type="FunFam" id="3.30.300.70:FF:000001">
    <property type="entry name" value="Ribosome maturation factor RimP"/>
    <property type="match status" value="1"/>
</dbReference>
<dbReference type="Gene3D" id="2.30.30.180">
    <property type="entry name" value="Ribosome maturation factor RimP, C-terminal domain"/>
    <property type="match status" value="1"/>
</dbReference>
<dbReference type="Gene3D" id="3.30.300.70">
    <property type="entry name" value="RimP-like superfamily, N-terminal"/>
    <property type="match status" value="1"/>
</dbReference>
<dbReference type="HAMAP" id="MF_01077">
    <property type="entry name" value="RimP"/>
    <property type="match status" value="1"/>
</dbReference>
<dbReference type="InterPro" id="IPR003728">
    <property type="entry name" value="Ribosome_maturation_RimP"/>
</dbReference>
<dbReference type="InterPro" id="IPR028998">
    <property type="entry name" value="RimP_C"/>
</dbReference>
<dbReference type="InterPro" id="IPR036847">
    <property type="entry name" value="RimP_C_sf"/>
</dbReference>
<dbReference type="InterPro" id="IPR028989">
    <property type="entry name" value="RimP_N"/>
</dbReference>
<dbReference type="InterPro" id="IPR035956">
    <property type="entry name" value="RimP_N_sf"/>
</dbReference>
<dbReference type="NCBIfam" id="NF000927">
    <property type="entry name" value="PRK00092.1-1"/>
    <property type="match status" value="1"/>
</dbReference>
<dbReference type="PANTHER" id="PTHR33867">
    <property type="entry name" value="RIBOSOME MATURATION FACTOR RIMP"/>
    <property type="match status" value="1"/>
</dbReference>
<dbReference type="PANTHER" id="PTHR33867:SF1">
    <property type="entry name" value="RIBOSOME MATURATION FACTOR RIMP"/>
    <property type="match status" value="1"/>
</dbReference>
<dbReference type="Pfam" id="PF17384">
    <property type="entry name" value="DUF150_C"/>
    <property type="match status" value="1"/>
</dbReference>
<dbReference type="Pfam" id="PF02576">
    <property type="entry name" value="RimP_N"/>
    <property type="match status" value="1"/>
</dbReference>
<dbReference type="SUPFAM" id="SSF74942">
    <property type="entry name" value="YhbC-like, C-terminal domain"/>
    <property type="match status" value="1"/>
</dbReference>
<dbReference type="SUPFAM" id="SSF75420">
    <property type="entry name" value="YhbC-like, N-terminal domain"/>
    <property type="match status" value="1"/>
</dbReference>
<organism>
    <name type="scientific">Escherichia coli (strain 55989 / EAEC)</name>
    <dbReference type="NCBI Taxonomy" id="585055"/>
    <lineage>
        <taxon>Bacteria</taxon>
        <taxon>Pseudomonadati</taxon>
        <taxon>Pseudomonadota</taxon>
        <taxon>Gammaproteobacteria</taxon>
        <taxon>Enterobacterales</taxon>
        <taxon>Enterobacteriaceae</taxon>
        <taxon>Escherichia</taxon>
    </lineage>
</organism>
<keyword id="KW-0963">Cytoplasm</keyword>
<keyword id="KW-1185">Reference proteome</keyword>
<keyword id="KW-0690">Ribosome biogenesis</keyword>
<sequence>MSTLEQKLTEMITAPVEALGFELVGIEFIRGRTSTLRIYIDSEDGINVDDCADVSHQVSAVLDVEDPITVAYNLEVSSPGLDRPLFTAEHYARFVGEEVTLVLRMAVQNRRKWQGVIKAVDGEMITVTVEGKDEVFALSNIQKANLVPHF</sequence>
<proteinExistence type="inferred from homology"/>
<feature type="chain" id="PRO_0000384650" description="Ribosome maturation factor RimP">
    <location>
        <begin position="1"/>
        <end position="150"/>
    </location>
</feature>
<gene>
    <name evidence="1" type="primary">rimP</name>
    <name type="ordered locus">EC55989_3590</name>
</gene>
<name>RIMP_ECO55</name>